<sequence length="452" mass="51384">MQRRIMGIETEFGVTCTFHGHRRLSPDEVARYLFRRVVSWGRSSNVFLRNGARLYLDVGSHPEYATAECDSLVQLVTHDRAGEWVLEDLLVDAEQRLADEGIGGDIYLFKNNTDSAGNSYGCHENYLIVRAGEFSRISDVLLPFLVTRQLICGAGKVLQTPKAATYCLSQRAEHIWEGVSSATTRSRPIINTRDEPHADAEKYRRLHVIVGDSNMSETTTMLKVGTAALVLEMIESGVAFRDFSLDNPIRAIREVSHDVTGRRPVRLAGGRQASALDIQREYYTRAVEHLQTREPNAQIEQVVDLWGRQLDAVESQDFAKVDTEIDWVIKRKLFQRYQDRYDMELSHPKIAQLDLAYHDIKRGRGIFDLLQRKGLAARVTTDEEIAEAVDQPPQTTRARLRGEFISAAQEAGRDFTVDWVHLKLNDQAQRTVLCKDPFRAVDERVKRLIASM</sequence>
<keyword id="KW-0067">ATP-binding</keyword>
<keyword id="KW-0436">Ligase</keyword>
<keyword id="KW-0460">Magnesium</keyword>
<keyword id="KW-0479">Metal-binding</keyword>
<keyword id="KW-0547">Nucleotide-binding</keyword>
<keyword id="KW-0833">Ubl conjugation pathway</keyword>
<accession>A5WP74</accession>
<comment type="function">
    <text evidence="1">Catalyzes the covalent attachment of the prokaryotic ubiquitin-like protein modifier Pup to the proteasomal substrate proteins, thereby targeting them for proteasomal degradation. This tagging system is termed pupylation. The ligation reaction involves the side-chain carboxylate of the C-terminal glutamate of Pup and the side-chain amino group of a substrate lysine.</text>
</comment>
<comment type="catalytic activity">
    <reaction evidence="1">
        <text>ATP + [prokaryotic ubiquitin-like protein]-L-glutamate + [protein]-L-lysine = ADP + phosphate + N(6)-([prokaryotic ubiquitin-like protein]-gamma-L-glutamyl)-[protein]-L-lysine.</text>
        <dbReference type="EC" id="6.3.1.19"/>
    </reaction>
</comment>
<comment type="pathway">
    <text evidence="1">Protein degradation; proteasomal Pup-dependent pathway.</text>
</comment>
<comment type="pathway">
    <text evidence="1">Protein modification; protein pupylation.</text>
</comment>
<comment type="miscellaneous">
    <text evidence="1">The reaction mechanism probably proceeds via the activation of Pup by phosphorylation of its C-terminal glutamate, which is then subject to nucleophilic attack by the substrate lysine, resulting in an isopeptide bond and the release of phosphate as a good leaving group.</text>
</comment>
<comment type="similarity">
    <text evidence="1">Belongs to the Pup ligase/Pup deamidase family. Pup-conjugating enzyme subfamily.</text>
</comment>
<dbReference type="EC" id="6.3.1.19" evidence="1"/>
<dbReference type="EMBL" id="CP000717">
    <property type="protein sequence ID" value="ABR06463.1"/>
    <property type="molecule type" value="Genomic_DNA"/>
</dbReference>
<dbReference type="RefSeq" id="WP_003410781.1">
    <property type="nucleotide sequence ID" value="NZ_KK339377.1"/>
</dbReference>
<dbReference type="SMR" id="A5WP74"/>
<dbReference type="GeneID" id="45426074"/>
<dbReference type="KEGG" id="mtf:TBFG_12132"/>
<dbReference type="PATRIC" id="fig|336982.11.peg.2339"/>
<dbReference type="HOGENOM" id="CLU_040524_0_1_11"/>
<dbReference type="UniPathway" id="UPA00997"/>
<dbReference type="UniPathway" id="UPA00998"/>
<dbReference type="GO" id="GO:0005524">
    <property type="term" value="F:ATP binding"/>
    <property type="evidence" value="ECO:0007669"/>
    <property type="project" value="UniProtKB-UniRule"/>
</dbReference>
<dbReference type="GO" id="GO:0016879">
    <property type="term" value="F:ligase activity, forming carbon-nitrogen bonds"/>
    <property type="evidence" value="ECO:0007669"/>
    <property type="project" value="InterPro"/>
</dbReference>
<dbReference type="GO" id="GO:0000287">
    <property type="term" value="F:magnesium ion binding"/>
    <property type="evidence" value="ECO:0007669"/>
    <property type="project" value="UniProtKB-UniRule"/>
</dbReference>
<dbReference type="GO" id="GO:0019787">
    <property type="term" value="F:ubiquitin-like protein transferase activity"/>
    <property type="evidence" value="ECO:0007669"/>
    <property type="project" value="UniProtKB-UniRule"/>
</dbReference>
<dbReference type="GO" id="GO:0019941">
    <property type="term" value="P:modification-dependent protein catabolic process"/>
    <property type="evidence" value="ECO:0007669"/>
    <property type="project" value="UniProtKB-UniRule"/>
</dbReference>
<dbReference type="GO" id="GO:0010498">
    <property type="term" value="P:proteasomal protein catabolic process"/>
    <property type="evidence" value="ECO:0007669"/>
    <property type="project" value="UniProtKB-UniRule"/>
</dbReference>
<dbReference type="GO" id="GO:0070490">
    <property type="term" value="P:protein pupylation"/>
    <property type="evidence" value="ECO:0007669"/>
    <property type="project" value="UniProtKB-UniRule"/>
</dbReference>
<dbReference type="HAMAP" id="MF_02111">
    <property type="entry name" value="Pup_ligase"/>
    <property type="match status" value="1"/>
</dbReference>
<dbReference type="InterPro" id="IPR022279">
    <property type="entry name" value="Pup_ligase"/>
</dbReference>
<dbReference type="InterPro" id="IPR004347">
    <property type="entry name" value="Pup_ligase/deamidase"/>
</dbReference>
<dbReference type="NCBIfam" id="TIGR03686">
    <property type="entry name" value="pupylate_PafA"/>
    <property type="match status" value="1"/>
</dbReference>
<dbReference type="PANTHER" id="PTHR42307">
    <property type="entry name" value="PUP DEAMIDASE/DEPUPYLASE"/>
    <property type="match status" value="1"/>
</dbReference>
<dbReference type="PANTHER" id="PTHR42307:SF3">
    <property type="entry name" value="PUP--PROTEIN LIGASE"/>
    <property type="match status" value="1"/>
</dbReference>
<dbReference type="Pfam" id="PF03136">
    <property type="entry name" value="Pup_ligase"/>
    <property type="match status" value="1"/>
</dbReference>
<dbReference type="PIRSF" id="PIRSF018077">
    <property type="entry name" value="UCP018077"/>
    <property type="match status" value="1"/>
</dbReference>
<protein>
    <recommendedName>
        <fullName evidence="1">Pup--protein ligase</fullName>
        <ecNumber evidence="1">6.3.1.19</ecNumber>
    </recommendedName>
    <alternativeName>
        <fullName evidence="1">Proteasome accessory factor A</fullName>
    </alternativeName>
    <alternativeName>
        <fullName evidence="1">Pup-conjugating enzyme</fullName>
    </alternativeName>
</protein>
<organism>
    <name type="scientific">Mycobacterium tuberculosis (strain F11)</name>
    <dbReference type="NCBI Taxonomy" id="336982"/>
    <lineage>
        <taxon>Bacteria</taxon>
        <taxon>Bacillati</taxon>
        <taxon>Actinomycetota</taxon>
        <taxon>Actinomycetes</taxon>
        <taxon>Mycobacteriales</taxon>
        <taxon>Mycobacteriaceae</taxon>
        <taxon>Mycobacterium</taxon>
        <taxon>Mycobacterium tuberculosis complex</taxon>
    </lineage>
</organism>
<feature type="chain" id="PRO_0000395936" description="Pup--protein ligase">
    <location>
        <begin position="1"/>
        <end position="452"/>
    </location>
</feature>
<feature type="active site" description="Proton acceptor" evidence="1">
    <location>
        <position position="57"/>
    </location>
</feature>
<feature type="binding site" evidence="1">
    <location>
        <position position="9"/>
    </location>
    <ligand>
        <name>Mg(2+)</name>
        <dbReference type="ChEBI" id="CHEBI:18420"/>
    </ligand>
</feature>
<feature type="binding site" evidence="1">
    <location>
        <position position="53"/>
    </location>
    <ligand>
        <name>ATP</name>
        <dbReference type="ChEBI" id="CHEBI:30616"/>
    </ligand>
</feature>
<feature type="binding site" evidence="1">
    <location>
        <position position="55"/>
    </location>
    <ligand>
        <name>Mg(2+)</name>
        <dbReference type="ChEBI" id="CHEBI:18420"/>
    </ligand>
</feature>
<feature type="binding site" evidence="1">
    <location>
        <position position="63"/>
    </location>
    <ligand>
        <name>Mg(2+)</name>
        <dbReference type="ChEBI" id="CHEBI:18420"/>
    </ligand>
</feature>
<feature type="binding site" evidence="1">
    <location>
        <position position="66"/>
    </location>
    <ligand>
        <name>ATP</name>
        <dbReference type="ChEBI" id="CHEBI:30616"/>
    </ligand>
</feature>
<feature type="binding site" evidence="1">
    <location>
        <position position="419"/>
    </location>
    <ligand>
        <name>ATP</name>
        <dbReference type="ChEBI" id="CHEBI:30616"/>
    </ligand>
</feature>
<proteinExistence type="inferred from homology"/>
<gene>
    <name evidence="1" type="primary">pafA</name>
    <name type="ordered locus">TBFG_12132</name>
</gene>
<name>PAFA_MYCTF</name>
<reference key="1">
    <citation type="submission" date="2007-04" db="EMBL/GenBank/DDBJ databases">
        <title>The complete genome sequence of Mycobacterium tuberculosis F11.</title>
        <authorList>
            <person name="Birren B."/>
            <person name="Lander E."/>
            <person name="Galagan J."/>
            <person name="Devon K."/>
            <person name="Nusbaum C."/>
            <person name="Borowsky M.L."/>
            <person name="Grabherr M."/>
            <person name="Mauceli E."/>
            <person name="Brockman W."/>
            <person name="Young S."/>
            <person name="LaButti K."/>
            <person name="Pushparaj V."/>
            <person name="Sykes S."/>
            <person name="Baldwin J."/>
            <person name="Fitzgerald M."/>
            <person name="Bloom T."/>
            <person name="Zimmer A."/>
            <person name="Settipalli S."/>
            <person name="Shea T."/>
            <person name="Arachchi H."/>
            <person name="Macdonald P."/>
            <person name="Abouelleil A."/>
            <person name="Lui A."/>
            <person name="Priest M."/>
            <person name="Berlin A."/>
            <person name="Gearin G."/>
            <person name="Brown A."/>
            <person name="Aftuck L."/>
            <person name="Bessette D."/>
            <person name="Allen N."/>
            <person name="Lubonja R."/>
            <person name="Lokyitsang T."/>
            <person name="Matthews C."/>
            <person name="Dunbar C."/>
            <person name="Benamara M."/>
            <person name="Nguyen T."/>
            <person name="Negash T."/>
            <person name="DeCaprio D."/>
            <person name="Crawford M."/>
            <person name="Koehrsen M."/>
            <person name="Engels R."/>
            <person name="Montgomery P."/>
            <person name="Pearson M."/>
            <person name="Howarth C."/>
            <person name="Kodira C."/>
            <person name="Zeng Q."/>
            <person name="Yandava C."/>
            <person name="O'Leary S."/>
            <person name="Alvarado L."/>
            <person name="Victor T."/>
            <person name="Murray M."/>
        </authorList>
    </citation>
    <scope>NUCLEOTIDE SEQUENCE [LARGE SCALE GENOMIC DNA]</scope>
    <source>
        <strain>F11</strain>
    </source>
</reference>
<evidence type="ECO:0000255" key="1">
    <source>
        <dbReference type="HAMAP-Rule" id="MF_02111"/>
    </source>
</evidence>